<keyword id="KW-0002">3D-structure</keyword>
<keyword id="KW-0067">ATP-binding</keyword>
<keyword id="KW-0408">Iron</keyword>
<keyword id="KW-0411">Iron-sulfur</keyword>
<keyword id="KW-0479">Metal-binding</keyword>
<keyword id="KW-0535">Nitrogen fixation</keyword>
<keyword id="KW-0547">Nucleotide-binding</keyword>
<keyword id="KW-0560">Oxidoreductase</keyword>
<proteinExistence type="evidence at protein level"/>
<name>VNFK_AZOVI</name>
<reference key="1">
    <citation type="journal article" date="1990" name="J. Bacteriol.">
        <title>Nucleotide sequences and mutational analysis of the structural genes for nitrogenase 2 of Azotobacter vinelandii.</title>
        <authorList>
            <person name="Joerger R.D."/>
            <person name="Loveless T.M."/>
            <person name="Pau R.N."/>
            <person name="Mitchenall L.A."/>
            <person name="Simon B.H."/>
            <person name="Bishop P.E."/>
        </authorList>
    </citation>
    <scope>NUCLEOTIDE SEQUENCE [GENOMIC DNA]</scope>
</reference>
<feature type="initiator methionine" description="Removed">
    <location>
        <position position="1"/>
    </location>
</feature>
<feature type="chain" id="PRO_0000153093" description="Nitrogenase vanadium-iron protein beta chain">
    <location>
        <begin position="2"/>
        <end position="475"/>
    </location>
</feature>
<feature type="binding site" evidence="1">
    <location>
        <position position="31"/>
    </location>
    <ligand>
        <name>[8Fe-7S] cluster</name>
        <dbReference type="ChEBI" id="CHEBI:21143"/>
        <note>ligand shared with alpha chain</note>
    </ligand>
</feature>
<feature type="binding site" evidence="1">
    <location>
        <position position="56"/>
    </location>
    <ligand>
        <name>[8Fe-7S] cluster</name>
        <dbReference type="ChEBI" id="CHEBI:21143"/>
        <note>ligand shared with alpha chain</note>
    </ligand>
</feature>
<feature type="binding site" evidence="1">
    <location>
        <position position="115"/>
    </location>
    <ligand>
        <name>[8Fe-7S] cluster</name>
        <dbReference type="ChEBI" id="CHEBI:21143"/>
        <note>ligand shared with alpha chain</note>
    </ligand>
</feature>
<feature type="binding site" evidence="1">
    <location>
        <position position="153"/>
    </location>
    <ligand>
        <name>[8Fe-7S] cluster</name>
        <dbReference type="ChEBI" id="CHEBI:21143"/>
        <note>ligand shared with alpha chain</note>
    </ligand>
</feature>
<feature type="strand" evidence="3">
    <location>
        <begin position="14"/>
        <end position="18"/>
    </location>
</feature>
<feature type="strand" evidence="3">
    <location>
        <begin position="22"/>
        <end position="26"/>
    </location>
</feature>
<feature type="helix" evidence="3">
    <location>
        <begin position="32"/>
        <end position="41"/>
    </location>
</feature>
<feature type="strand" evidence="3">
    <location>
        <begin position="49"/>
        <end position="52"/>
    </location>
</feature>
<feature type="helix" evidence="3">
    <location>
        <begin position="55"/>
        <end position="68"/>
    </location>
</feature>
<feature type="helix" evidence="3">
    <location>
        <begin position="81"/>
        <end position="86"/>
    </location>
</feature>
<feature type="helix" evidence="3">
    <location>
        <begin position="89"/>
        <end position="102"/>
    </location>
</feature>
<feature type="strand" evidence="3">
    <location>
        <begin position="108"/>
        <end position="113"/>
    </location>
</feature>
<feature type="helix" evidence="3">
    <location>
        <begin position="115"/>
        <end position="120"/>
    </location>
</feature>
<feature type="helix" evidence="3">
    <location>
        <begin position="124"/>
        <end position="138"/>
    </location>
</feature>
<feature type="strand" evidence="3">
    <location>
        <begin position="145"/>
        <end position="149"/>
    </location>
</feature>
<feature type="helix" evidence="3">
    <location>
        <begin position="158"/>
        <end position="177"/>
    </location>
</feature>
<feature type="strand" evidence="3">
    <location>
        <begin position="186"/>
        <end position="189"/>
    </location>
</feature>
<feature type="helix" evidence="3">
    <location>
        <begin position="195"/>
        <end position="207"/>
    </location>
</feature>
<feature type="strand" evidence="3">
    <location>
        <begin position="212"/>
        <end position="216"/>
    </location>
</feature>
<feature type="helix" evidence="3">
    <location>
        <begin position="219"/>
        <end position="221"/>
    </location>
</feature>
<feature type="helix" evidence="3">
    <location>
        <begin position="239"/>
        <end position="243"/>
    </location>
</feature>
<feature type="helix" evidence="3">
    <location>
        <begin position="244"/>
        <end position="247"/>
    </location>
</feature>
<feature type="strand" evidence="3">
    <location>
        <begin position="249"/>
        <end position="253"/>
    </location>
</feature>
<feature type="turn" evidence="3">
    <location>
        <begin position="256"/>
        <end position="259"/>
    </location>
</feature>
<feature type="helix" evidence="3">
    <location>
        <begin position="260"/>
        <end position="270"/>
    </location>
</feature>
<feature type="strand" evidence="3">
    <location>
        <begin position="274"/>
        <end position="276"/>
    </location>
</feature>
<feature type="helix" evidence="3">
    <location>
        <begin position="283"/>
        <end position="297"/>
    </location>
</feature>
<feature type="helix" evidence="3">
    <location>
        <begin position="303"/>
        <end position="317"/>
    </location>
</feature>
<feature type="helix" evidence="3">
    <location>
        <begin position="320"/>
        <end position="323"/>
    </location>
</feature>
<feature type="turn" evidence="3">
    <location>
        <begin position="324"/>
        <end position="326"/>
    </location>
</feature>
<feature type="strand" evidence="3">
    <location>
        <begin position="328"/>
        <end position="334"/>
    </location>
</feature>
<feature type="helix" evidence="3">
    <location>
        <begin position="335"/>
        <end position="347"/>
    </location>
</feature>
<feature type="strand" evidence="3">
    <location>
        <begin position="351"/>
        <end position="356"/>
    </location>
</feature>
<feature type="helix" evidence="3">
    <location>
        <begin position="362"/>
        <end position="365"/>
    </location>
</feature>
<feature type="helix" evidence="3">
    <location>
        <begin position="369"/>
        <end position="377"/>
    </location>
</feature>
<feature type="strand" evidence="3">
    <location>
        <begin position="382"/>
        <end position="387"/>
    </location>
</feature>
<feature type="helix" evidence="3">
    <location>
        <begin position="391"/>
        <end position="398"/>
    </location>
</feature>
<feature type="strand" evidence="3">
    <location>
        <begin position="404"/>
        <end position="408"/>
    </location>
</feature>
<feature type="helix" evidence="3">
    <location>
        <begin position="410"/>
        <end position="412"/>
    </location>
</feature>
<feature type="helix" evidence="3">
    <location>
        <begin position="413"/>
        <end position="419"/>
    </location>
</feature>
<feature type="strand" evidence="3">
    <location>
        <begin position="423"/>
        <end position="425"/>
    </location>
</feature>
<feature type="strand" evidence="3">
    <location>
        <begin position="433"/>
        <end position="435"/>
    </location>
</feature>
<feature type="helix" evidence="3">
    <location>
        <begin position="436"/>
        <end position="438"/>
    </location>
</feature>
<feature type="helix" evidence="3">
    <location>
        <begin position="443"/>
        <end position="465"/>
    </location>
</feature>
<feature type="helix" evidence="3">
    <location>
        <begin position="469"/>
        <end position="471"/>
    </location>
</feature>
<accession>P16856</accession>
<dbReference type="EC" id="1.18.6.1"/>
<dbReference type="EMBL" id="M32371">
    <property type="protein sequence ID" value="AAA22174.1"/>
    <property type="molecule type" value="Genomic_DNA"/>
</dbReference>
<dbReference type="PIR" id="E35405">
    <property type="entry name" value="E35405"/>
</dbReference>
<dbReference type="RefSeq" id="WP_012698948.1">
    <property type="nucleotide sequence ID" value="NZ_FPKM01000002.1"/>
</dbReference>
<dbReference type="PDB" id="5N6Y">
    <property type="method" value="X-ray"/>
    <property type="resolution" value="1.35 A"/>
    <property type="chains" value="B/E=1-475"/>
</dbReference>
<dbReference type="PDB" id="7ADR">
    <property type="method" value="X-ray"/>
    <property type="resolution" value="1.00 A"/>
    <property type="chains" value="B/E=1-475"/>
</dbReference>
<dbReference type="PDB" id="7ADY">
    <property type="method" value="X-ray"/>
    <property type="resolution" value="1.05 A"/>
    <property type="chains" value="B/E=1-475"/>
</dbReference>
<dbReference type="PDB" id="7AIZ">
    <property type="method" value="X-ray"/>
    <property type="resolution" value="1.05 A"/>
    <property type="chains" value="B/E=1-475"/>
</dbReference>
<dbReference type="PDBsum" id="5N6Y"/>
<dbReference type="PDBsum" id="7ADR"/>
<dbReference type="PDBsum" id="7ADY"/>
<dbReference type="PDBsum" id="7AIZ"/>
<dbReference type="SMR" id="P16856"/>
<dbReference type="DIP" id="DIP-48894N"/>
<dbReference type="IntAct" id="P16856">
    <property type="interactions" value="2"/>
</dbReference>
<dbReference type="GeneID" id="88183719"/>
<dbReference type="OMA" id="LAHMFFA"/>
<dbReference type="GO" id="GO:0016613">
    <property type="term" value="C:vanadium-iron nitrogenase complex"/>
    <property type="evidence" value="ECO:0007669"/>
    <property type="project" value="InterPro"/>
</dbReference>
<dbReference type="GO" id="GO:0005524">
    <property type="term" value="F:ATP binding"/>
    <property type="evidence" value="ECO:0007669"/>
    <property type="project" value="UniProtKB-KW"/>
</dbReference>
<dbReference type="GO" id="GO:0051536">
    <property type="term" value="F:iron-sulfur cluster binding"/>
    <property type="evidence" value="ECO:0007669"/>
    <property type="project" value="UniProtKB-KW"/>
</dbReference>
<dbReference type="GO" id="GO:0046872">
    <property type="term" value="F:metal ion binding"/>
    <property type="evidence" value="ECO:0007669"/>
    <property type="project" value="UniProtKB-KW"/>
</dbReference>
<dbReference type="GO" id="GO:0016163">
    <property type="term" value="F:nitrogenase activity"/>
    <property type="evidence" value="ECO:0007669"/>
    <property type="project" value="UniProtKB-EC"/>
</dbReference>
<dbReference type="GO" id="GO:0009399">
    <property type="term" value="P:nitrogen fixation"/>
    <property type="evidence" value="ECO:0007669"/>
    <property type="project" value="UniProtKB-KW"/>
</dbReference>
<dbReference type="CDD" id="cd01973">
    <property type="entry name" value="Nitrogenase_VFe_beta_like"/>
    <property type="match status" value="1"/>
</dbReference>
<dbReference type="Gene3D" id="3.40.50.1980">
    <property type="entry name" value="Nitrogenase molybdenum iron protein domain"/>
    <property type="match status" value="3"/>
</dbReference>
<dbReference type="Gene3D" id="1.20.89.10">
    <property type="entry name" value="Nitrogenase Molybdenum-iron Protein, subunit B, domain 4"/>
    <property type="match status" value="1"/>
</dbReference>
<dbReference type="InterPro" id="IPR050152">
    <property type="entry name" value="ChlB/BchB/BchZ"/>
</dbReference>
<dbReference type="InterPro" id="IPR000510">
    <property type="entry name" value="Nase/OxRdtase_comp1"/>
</dbReference>
<dbReference type="InterPro" id="IPR000318">
    <property type="entry name" value="Nase_comp1_CS"/>
</dbReference>
<dbReference type="InterPro" id="IPR014281">
    <property type="entry name" value="Nase_VnfK"/>
</dbReference>
<dbReference type="NCBIfam" id="TIGR02932">
    <property type="entry name" value="vnfK_nitrog"/>
    <property type="match status" value="1"/>
</dbReference>
<dbReference type="PANTHER" id="PTHR33712">
    <property type="entry name" value="LIGHT-INDEPENDENT PROTOCHLOROPHYLLIDE REDUCTASE SUBUNIT B"/>
    <property type="match status" value="1"/>
</dbReference>
<dbReference type="PANTHER" id="PTHR33712:SF7">
    <property type="entry name" value="LIGHT-INDEPENDENT PROTOCHLOROPHYLLIDE REDUCTASE SUBUNIT B"/>
    <property type="match status" value="1"/>
</dbReference>
<dbReference type="Pfam" id="PF00148">
    <property type="entry name" value="Oxidored_nitro"/>
    <property type="match status" value="1"/>
</dbReference>
<dbReference type="SUPFAM" id="SSF53807">
    <property type="entry name" value="Helical backbone' metal receptor"/>
    <property type="match status" value="1"/>
</dbReference>
<dbReference type="PROSITE" id="PS00699">
    <property type="entry name" value="NITROGENASE_1_1"/>
    <property type="match status" value="1"/>
</dbReference>
<dbReference type="PROSITE" id="PS00090">
    <property type="entry name" value="NITROGENASE_1_2"/>
    <property type="match status" value="1"/>
</dbReference>
<protein>
    <recommendedName>
        <fullName>Nitrogenase vanadium-iron protein beta chain</fullName>
        <ecNumber>1.18.6.1</ecNumber>
    </recommendedName>
    <alternativeName>
        <fullName>Dinitrogenase 2 subunit beta</fullName>
    </alternativeName>
    <alternativeName>
        <fullName>Nitrogenase component I</fullName>
    </alternativeName>
</protein>
<comment type="function">
    <text>This vanadium-iron protein is part of the nitrogenase complex that catalyzes the key enzymatic reactions in nitrogen fixation.</text>
</comment>
<comment type="catalytic activity">
    <reaction>
        <text>N2 + 8 reduced [2Fe-2S]-[ferredoxin] + 16 ATP + 16 H2O = H2 + 8 oxidized [2Fe-2S]-[ferredoxin] + 2 NH4(+) + 16 ADP + 16 phosphate + 6 H(+)</text>
        <dbReference type="Rhea" id="RHEA:21448"/>
        <dbReference type="Rhea" id="RHEA-COMP:10000"/>
        <dbReference type="Rhea" id="RHEA-COMP:10001"/>
        <dbReference type="ChEBI" id="CHEBI:15377"/>
        <dbReference type="ChEBI" id="CHEBI:15378"/>
        <dbReference type="ChEBI" id="CHEBI:17997"/>
        <dbReference type="ChEBI" id="CHEBI:18276"/>
        <dbReference type="ChEBI" id="CHEBI:28938"/>
        <dbReference type="ChEBI" id="CHEBI:30616"/>
        <dbReference type="ChEBI" id="CHEBI:33737"/>
        <dbReference type="ChEBI" id="CHEBI:33738"/>
        <dbReference type="ChEBI" id="CHEBI:43474"/>
        <dbReference type="ChEBI" id="CHEBI:456216"/>
        <dbReference type="EC" id="1.18.6.1"/>
    </reaction>
</comment>
<comment type="cofactor">
    <cofactor evidence="1">
        <name>[8Fe-7S] cluster</name>
        <dbReference type="ChEBI" id="CHEBI:21143"/>
    </cofactor>
    <text evidence="1">Binds 1 [8Fe-7S] cluster per heterodimer.</text>
</comment>
<comment type="subunit">
    <text>Hexamer of two alpha, two beta, and two delta chains.</text>
</comment>
<comment type="similarity">
    <text evidence="2">Belongs to the NifD/NifK/NifE/NifN family.</text>
</comment>
<gene>
    <name type="primary">vnfK</name>
</gene>
<organism>
    <name type="scientific">Azotobacter vinelandii</name>
    <dbReference type="NCBI Taxonomy" id="354"/>
    <lineage>
        <taxon>Bacteria</taxon>
        <taxon>Pseudomonadati</taxon>
        <taxon>Pseudomonadota</taxon>
        <taxon>Gammaproteobacteria</taxon>
        <taxon>Pseudomonadales</taxon>
        <taxon>Pseudomonadaceae</taxon>
        <taxon>Azotobacter</taxon>
    </lineage>
</organism>
<sequence length="475" mass="52776">MSNCELTVLKPAEVKLSPRDREGIINPMYDCQPAGAQYAGIGIKDCIPLVHGGQGCTMFVRLLFAQHFKENFDVASTSLHEESAVFGGAKRVEEGVLVLARRYPNLRVIPIITTCSTEVIGDDIEGSIRVCNRALEAEFPDRKIYLAPVHTPSFKGSHVTGYAECVKSVFKTITDAHGKGQPSGKLNVFPGWVNPGDVVLLKRYFKEMDVEANIYMDTEDFDSPMLPNKSIETHGRTTVEDIADSANALATLSLARYEGNTTGELLQKTFAVPNALVNTPYGIKNTDDMLRKIAEVTGKEIPESLVRERGIALDALADLAHMFFANKKVAIFGHPDLVLGLAQFCMEVELEPVLLLIGDDQGNKYKKDPRIEELKNTAHFDIEIVHNADLWELEKRINAGLQLDLIMGHSKGRYVAIEANIPMVRVGFPTFDRAGLYRKPSIGYQGAMELGEMIANAMFAHMEYTRNKEWILNTW</sequence>
<evidence type="ECO:0000250" key="1"/>
<evidence type="ECO:0000305" key="2"/>
<evidence type="ECO:0007829" key="3">
    <source>
        <dbReference type="PDB" id="7ADR"/>
    </source>
</evidence>